<protein>
    <recommendedName>
        <fullName>Uncharacterized lipoprotein SAOUHSC_00055</fullName>
    </recommendedName>
</protein>
<organism>
    <name type="scientific">Staphylococcus aureus (strain NCTC 8325 / PS 47)</name>
    <dbReference type="NCBI Taxonomy" id="93061"/>
    <lineage>
        <taxon>Bacteria</taxon>
        <taxon>Bacillati</taxon>
        <taxon>Bacillota</taxon>
        <taxon>Bacilli</taxon>
        <taxon>Bacillales</taxon>
        <taxon>Staphylococcaceae</taxon>
        <taxon>Staphylococcus</taxon>
    </lineage>
</organism>
<gene>
    <name type="ordered locus">SAOUHSC_00055</name>
</gene>
<keyword id="KW-1003">Cell membrane</keyword>
<keyword id="KW-0449">Lipoprotein</keyword>
<keyword id="KW-0472">Membrane</keyword>
<keyword id="KW-0564">Palmitate</keyword>
<keyword id="KW-1185">Reference proteome</keyword>
<keyword id="KW-0732">Signal</keyword>
<evidence type="ECO:0000255" key="1">
    <source>
        <dbReference type="PROSITE-ProRule" id="PRU00303"/>
    </source>
</evidence>
<evidence type="ECO:0000305" key="2"/>
<accession>Q2G1P8</accession>
<dbReference type="EMBL" id="CP000253">
    <property type="protein sequence ID" value="ABD29243.1"/>
    <property type="molecule type" value="Genomic_DNA"/>
</dbReference>
<dbReference type="RefSeq" id="WP_000826311.1">
    <property type="nucleotide sequence ID" value="NZ_LS483365.1"/>
</dbReference>
<dbReference type="RefSeq" id="YP_498660.1">
    <property type="nucleotide sequence ID" value="NC_007795.1"/>
</dbReference>
<dbReference type="SMR" id="Q2G1P8"/>
<dbReference type="STRING" id="93061.SAOUHSC_00055"/>
<dbReference type="GeneID" id="3919087"/>
<dbReference type="KEGG" id="sao:SAOUHSC_00055"/>
<dbReference type="PATRIC" id="fig|93061.5.peg.49"/>
<dbReference type="HOGENOM" id="CLU_071589_0_1_9"/>
<dbReference type="OrthoDB" id="2189886at2"/>
<dbReference type="PRO" id="PR:Q2G1P8"/>
<dbReference type="Proteomes" id="UP000008816">
    <property type="component" value="Chromosome"/>
</dbReference>
<dbReference type="GO" id="GO:0005886">
    <property type="term" value="C:plasma membrane"/>
    <property type="evidence" value="ECO:0007669"/>
    <property type="project" value="UniProtKB-SubCell"/>
</dbReference>
<dbReference type="Gene3D" id="2.50.20.40">
    <property type="match status" value="1"/>
</dbReference>
<dbReference type="InterPro" id="IPR007595">
    <property type="entry name" value="Csa"/>
</dbReference>
<dbReference type="InterPro" id="IPR038641">
    <property type="entry name" value="Csa_sf"/>
</dbReference>
<dbReference type="NCBIfam" id="TIGR01742">
    <property type="entry name" value="SA_tandem_lipo"/>
    <property type="match status" value="1"/>
</dbReference>
<dbReference type="Pfam" id="PF04507">
    <property type="entry name" value="DUF576"/>
    <property type="match status" value="1"/>
</dbReference>
<dbReference type="PROSITE" id="PS51257">
    <property type="entry name" value="PROKAR_LIPOPROTEIN"/>
    <property type="match status" value="1"/>
</dbReference>
<sequence>MKRLNKLVLYISFLILVISFTAGCGIGKEAEVKKSFEKTLSMYPIKNLEDLYDKEGYRDDEFDKNDKGTWIIGSEMVVQPKGERMKSKGMVLYMNRNTKTTTGKYIVSETLHDEDGRPKSKDKEYPVKMVDNKIIPTKGIKDENIKKEIENFKFFAQYGSFKDLSKYKDGDISYNPEVPSYSAKYQLTNDDYNVKQLRKRYKIPTNKAPKLLLKGSGDLKGSSVGYKDIEFTFVEKKGENTFFTDSLHLEPSEDK</sequence>
<name>Y055_STAA8</name>
<reference key="1">
    <citation type="book" date="2006" name="Gram positive pathogens, 2nd edition">
        <title>The Staphylococcus aureus NCTC 8325 genome.</title>
        <editorList>
            <person name="Fischetti V."/>
            <person name="Novick R."/>
            <person name="Ferretti J."/>
            <person name="Portnoy D."/>
            <person name="Rood J."/>
        </editorList>
        <authorList>
            <person name="Gillaspy A.F."/>
            <person name="Worrell V."/>
            <person name="Orvis J."/>
            <person name="Roe B.A."/>
            <person name="Dyer D.W."/>
            <person name="Iandolo J.J."/>
        </authorList>
    </citation>
    <scope>NUCLEOTIDE SEQUENCE [LARGE SCALE GENOMIC DNA]</scope>
    <source>
        <strain>NCTC 8325 / PS 47</strain>
    </source>
</reference>
<comment type="subcellular location">
    <subcellularLocation>
        <location evidence="1">Cell membrane</location>
        <topology evidence="1">Lipid-anchor</topology>
    </subcellularLocation>
</comment>
<comment type="similarity">
    <text evidence="2">Belongs to the staphylococcal tandem lipoprotein family.</text>
</comment>
<proteinExistence type="inferred from homology"/>
<feature type="signal peptide" evidence="1">
    <location>
        <begin position="1"/>
        <end position="23"/>
    </location>
</feature>
<feature type="chain" id="PRO_0000282087" description="Uncharacterized lipoprotein SAOUHSC_00055">
    <location>
        <begin position="24"/>
        <end position="255"/>
    </location>
</feature>
<feature type="lipid moiety-binding region" description="N-palmitoyl cysteine" evidence="1">
    <location>
        <position position="24"/>
    </location>
</feature>
<feature type="lipid moiety-binding region" description="S-diacylglycerol cysteine" evidence="1">
    <location>
        <position position="24"/>
    </location>
</feature>